<dbReference type="EC" id="1.17.4.1" evidence="1"/>
<dbReference type="EMBL" id="AF005370">
    <property type="protein sequence ID" value="AAC58108.1"/>
    <property type="molecule type" value="Genomic_DNA"/>
</dbReference>
<dbReference type="PIR" id="T03156">
    <property type="entry name" value="T03156"/>
</dbReference>
<dbReference type="RefSeq" id="NP_065560.1">
    <property type="nucleotide sequence ID" value="NC_002531.1"/>
</dbReference>
<dbReference type="SMR" id="O36411"/>
<dbReference type="KEGG" id="vg:911785"/>
<dbReference type="Proteomes" id="UP000000941">
    <property type="component" value="Segment"/>
</dbReference>
<dbReference type="GO" id="GO:0005524">
    <property type="term" value="F:ATP binding"/>
    <property type="evidence" value="ECO:0007669"/>
    <property type="project" value="UniProtKB-UniRule"/>
</dbReference>
<dbReference type="GO" id="GO:0004748">
    <property type="term" value="F:ribonucleoside-diphosphate reductase activity, thioredoxin disulfide as acceptor"/>
    <property type="evidence" value="ECO:0007669"/>
    <property type="project" value="UniProtKB-UniRule"/>
</dbReference>
<dbReference type="GO" id="GO:0009263">
    <property type="term" value="P:deoxyribonucleotide biosynthetic process"/>
    <property type="evidence" value="ECO:0007669"/>
    <property type="project" value="InterPro"/>
</dbReference>
<dbReference type="GO" id="GO:0006260">
    <property type="term" value="P:DNA replication"/>
    <property type="evidence" value="ECO:0007669"/>
    <property type="project" value="UniProtKB-KW"/>
</dbReference>
<dbReference type="GO" id="GO:0019046">
    <property type="term" value="P:release from viral latency"/>
    <property type="evidence" value="ECO:0007669"/>
    <property type="project" value="UniProtKB-KW"/>
</dbReference>
<dbReference type="Gene3D" id="3.20.70.20">
    <property type="match status" value="1"/>
</dbReference>
<dbReference type="HAMAP" id="MF_04026">
    <property type="entry name" value="HSV_RIR1"/>
    <property type="match status" value="1"/>
</dbReference>
<dbReference type="InterPro" id="IPR034717">
    <property type="entry name" value="HSV_RIR1"/>
</dbReference>
<dbReference type="InterPro" id="IPR013346">
    <property type="entry name" value="NrdE_NrdA_C"/>
</dbReference>
<dbReference type="InterPro" id="IPR000788">
    <property type="entry name" value="RNR_lg_C"/>
</dbReference>
<dbReference type="InterPro" id="IPR013509">
    <property type="entry name" value="RNR_lsu_N"/>
</dbReference>
<dbReference type="InterPro" id="IPR008926">
    <property type="entry name" value="RNR_R1-su_N"/>
</dbReference>
<dbReference type="InterPro" id="IPR039718">
    <property type="entry name" value="Rrm1"/>
</dbReference>
<dbReference type="NCBIfam" id="TIGR02506">
    <property type="entry name" value="NrdE_NrdA"/>
    <property type="match status" value="1"/>
</dbReference>
<dbReference type="PANTHER" id="PTHR11573">
    <property type="entry name" value="RIBONUCLEOSIDE-DIPHOSPHATE REDUCTASE LARGE CHAIN"/>
    <property type="match status" value="1"/>
</dbReference>
<dbReference type="PANTHER" id="PTHR11573:SF6">
    <property type="entry name" value="RIBONUCLEOSIDE-DIPHOSPHATE REDUCTASE LARGE SUBUNIT"/>
    <property type="match status" value="1"/>
</dbReference>
<dbReference type="Pfam" id="PF02867">
    <property type="entry name" value="Ribonuc_red_lgC"/>
    <property type="match status" value="1"/>
</dbReference>
<dbReference type="Pfam" id="PF00317">
    <property type="entry name" value="Ribonuc_red_lgN"/>
    <property type="match status" value="1"/>
</dbReference>
<dbReference type="PRINTS" id="PR01183">
    <property type="entry name" value="RIBORDTASEM1"/>
</dbReference>
<dbReference type="SUPFAM" id="SSF51998">
    <property type="entry name" value="PFL-like glycyl radical enzymes"/>
    <property type="match status" value="1"/>
</dbReference>
<dbReference type="SUPFAM" id="SSF48168">
    <property type="entry name" value="R1 subunit of ribonucleotide reductase, N-terminal domain"/>
    <property type="match status" value="1"/>
</dbReference>
<dbReference type="PROSITE" id="PS00089">
    <property type="entry name" value="RIBORED_LARGE"/>
    <property type="match status" value="1"/>
</dbReference>
<accession>O36411</accession>
<organismHost>
    <name type="scientific">Connochaetes taurinus</name>
    <name type="common">Blue wildebeest</name>
    <dbReference type="NCBI Taxonomy" id="9927"/>
</organismHost>
<comment type="function">
    <text evidence="1">Ribonucleoside-diphosphate reductase holoenzyme provides the precursors necessary for viral DNA synthesis. Allows virus growth in non-dividing cells, as well as reactivation from latency in infected hosts. Catalyzes the biosynthesis of deoxyribonucleotides from the corresponding ribonucleotides.</text>
</comment>
<comment type="catalytic activity">
    <reaction evidence="1">
        <text>a 2'-deoxyribonucleoside 5'-diphosphate + [thioredoxin]-disulfide + H2O = a ribonucleoside 5'-diphosphate + [thioredoxin]-dithiol</text>
        <dbReference type="Rhea" id="RHEA:23252"/>
        <dbReference type="Rhea" id="RHEA-COMP:10698"/>
        <dbReference type="Rhea" id="RHEA-COMP:10700"/>
        <dbReference type="ChEBI" id="CHEBI:15377"/>
        <dbReference type="ChEBI" id="CHEBI:29950"/>
        <dbReference type="ChEBI" id="CHEBI:50058"/>
        <dbReference type="ChEBI" id="CHEBI:57930"/>
        <dbReference type="ChEBI" id="CHEBI:73316"/>
        <dbReference type="EC" id="1.17.4.1"/>
    </reaction>
</comment>
<comment type="subunit">
    <text evidence="1">Heterotetramer composed of a homodimer of the large subunit (R1) and a homodimer of the small subunit (R2). Larger multisubunit protein complex are also active, composed of (R1)n(R2)n.</text>
</comment>
<comment type="similarity">
    <text evidence="1">Belongs to the ribonucleoside diphosphate reductase large chain family.</text>
</comment>
<feature type="chain" id="PRO_0000405696" description="Ribonucleoside-diphosphate reductase large subunit">
    <location>
        <begin position="1"/>
        <end position="780"/>
    </location>
</feature>
<feature type="active site" description="Proton acceptor" evidence="1">
    <location>
        <position position="393"/>
    </location>
</feature>
<feature type="active site" description="Cysteine radical intermediate" evidence="1">
    <location>
        <position position="395"/>
    </location>
</feature>
<feature type="active site" description="Proton acceptor" evidence="1">
    <location>
        <position position="397"/>
    </location>
</feature>
<feature type="binding site" evidence="1">
    <location>
        <position position="177"/>
    </location>
    <ligand>
        <name>substrate</name>
    </ligand>
</feature>
<feature type="binding site" evidence="1">
    <location>
        <begin position="192"/>
        <end position="193"/>
    </location>
    <ligand>
        <name>substrate</name>
    </ligand>
</feature>
<feature type="binding site" evidence="1">
    <location>
        <position position="223"/>
    </location>
    <ligand>
        <name>substrate</name>
    </ligand>
</feature>
<feature type="binding site" evidence="1">
    <location>
        <begin position="393"/>
        <end position="397"/>
    </location>
    <ligand>
        <name>substrate</name>
    </ligand>
</feature>
<feature type="binding site" evidence="1">
    <location>
        <begin position="595"/>
        <end position="599"/>
    </location>
    <ligand>
        <name>substrate</name>
    </ligand>
</feature>
<feature type="site" description="Important for hydrogen atom transfer" evidence="1">
    <location>
        <position position="193"/>
    </location>
</feature>
<feature type="site" description="Important for hydrogen atom transfer" evidence="1">
    <location>
        <position position="409"/>
    </location>
</feature>
<feature type="site" description="Important for electron transfer" evidence="1">
    <location>
        <position position="726"/>
    </location>
</feature>
<feature type="site" description="Important for electron transfer" evidence="1">
    <location>
        <position position="727"/>
    </location>
</feature>
<feature type="site" description="Interacts with thioredoxin/glutaredoxin" evidence="1">
    <location>
        <position position="776"/>
    </location>
</feature>
<feature type="site" description="Interacts with thioredoxin/glutaredoxin" evidence="1">
    <location>
        <position position="779"/>
    </location>
</feature>
<feature type="disulfide bond" description="Redox-active" evidence="1">
    <location>
        <begin position="193"/>
        <end position="409"/>
    </location>
</feature>
<evidence type="ECO:0000255" key="1">
    <source>
        <dbReference type="HAMAP-Rule" id="MF_04026"/>
    </source>
</evidence>
<organism>
    <name type="scientific">Alcelaphine herpesvirus 1 (strain C500)</name>
    <name type="common">AlHV-1</name>
    <name type="synonym">Malignant catarrhal fever virus</name>
    <dbReference type="NCBI Taxonomy" id="654901"/>
    <lineage>
        <taxon>Viruses</taxon>
        <taxon>Duplodnaviria</taxon>
        <taxon>Heunggongvirae</taxon>
        <taxon>Peploviricota</taxon>
        <taxon>Herviviricetes</taxon>
        <taxon>Herpesvirales</taxon>
        <taxon>Orthoherpesviridae</taxon>
        <taxon>Gammaherpesvirinae</taxon>
        <taxon>Macavirus</taxon>
        <taxon>Macavirus alcelaphinegamma1</taxon>
    </lineage>
</organism>
<sequence>MASAEATPQQQIDQLKVNAGWDMKSNIKAGLLHHEEMEKKATKTVTEYIEKFADVLEENVLRFLQDNAEMLELCIYMYEQLPAYKAVKSRGILSAKRFYDTYVLRTADGSCYESVSHCFMRIAAFCTVQVLTNSALKITILYLGRDKLFKDLPCSPTMDLFIYFFSPLSHQLVCCATPIMRSAGLRDANLASCFLINPDLSTEKSTTTALLQELTMLLSAKSGVGCNVTSFGVDEKCIQSCVGLINSQVEFFNDQNPRPVSVAAYMEVWHSQIQEFLAVKLPENPSRCASIYQGLCIPKLFFEKFIEDPGQNWYLFKPEKSGNLANLYGDEFRSEYERLVGIGCYADAIPIKSLMFLIINTIIKTGSPYIIYKEACNEHHWKNMEGCAIASANLCAEVIQYPGADVSTCNLANVCLPMCLVTVSNDSHSPLEKTYCGNVIESQAVSGVGFSMPILHAAVEVAVFLVNCAIAGGKCVTPGMERGQRERSMGIGVHGLADVFAEMGYSYLDERAARLDVEIFENMYFRAVKTSNNICRLGGGRPFEGWGESKLRHGFFHWQGWEDVNLSIPITEWEKLSRRCISSGVYNSQFIALMPTVGSSLLTGFSESYYPYFANISSKVSSKEEVMKPNMTFWNRVSKEDLDTVRFFSGDVALFPEPLKEKYSLFLSAFDYCAEKQLARARLRAPFVDQSQSHSFHLKEENVVSARFLKDLILSGYTLGLKTIMYYCKVKKQSTMSSFQCLRDQNKSEMTGNDQGVEPESYIKCTAAGGETSEACLHCQ</sequence>
<protein>
    <recommendedName>
        <fullName evidence="1">Ribonucleoside-diphosphate reductase large subunit</fullName>
        <shortName evidence="1">R1</shortName>
        <ecNumber evidence="1">1.17.4.1</ecNumber>
    </recommendedName>
    <alternativeName>
        <fullName evidence="1">Ribonucleotide reductase large subunit</fullName>
    </alternativeName>
</protein>
<reference key="1">
    <citation type="journal article" date="1997" name="J. Virol.">
        <title>Primary structure of the alcelaphine herpesvirus 1 genome.</title>
        <authorList>
            <person name="Ensser A."/>
            <person name="Pflanz R."/>
            <person name="Fleckenstein B."/>
        </authorList>
    </citation>
    <scope>NUCLEOTIDE SEQUENCE [LARGE SCALE GENOMIC DNA]</scope>
</reference>
<gene>
    <name evidence="1" type="primary">RIR1</name>
    <name type="ordered locus">61</name>
</gene>
<keyword id="KW-0067">ATP-binding</keyword>
<keyword id="KW-1015">Disulfide bond</keyword>
<keyword id="KW-0235">DNA replication</keyword>
<keyword id="KW-0244">Early protein</keyword>
<keyword id="KW-0547">Nucleotide-binding</keyword>
<keyword id="KW-0560">Oxidoreductase</keyword>
<keyword id="KW-1185">Reference proteome</keyword>
<keyword id="KW-1251">Viral latency</keyword>
<keyword id="KW-1272">Viral reactivation from latency</keyword>
<name>RIR1_ALHV1</name>
<proteinExistence type="inferred from homology"/>